<name>DNAI7_CIOIN</name>
<keyword id="KW-1185">Reference proteome</keyword>
<comment type="similarity">
    <text evidence="2">Belongs to the DNAI7 family.</text>
</comment>
<accession>Q8T880</accession>
<dbReference type="EMBL" id="AB083181">
    <property type="protein sequence ID" value="BAB88834.1"/>
    <property type="molecule type" value="mRNA"/>
</dbReference>
<dbReference type="RefSeq" id="NP_001027647.1">
    <property type="nucleotide sequence ID" value="NM_001032475.1"/>
</dbReference>
<dbReference type="SMR" id="Q8T880"/>
<dbReference type="STRING" id="7719.ENSCINP00000002405"/>
<dbReference type="GeneID" id="445649"/>
<dbReference type="KEGG" id="cin:445649"/>
<dbReference type="CTD" id="445649"/>
<dbReference type="eggNOG" id="ENOG502QQM9">
    <property type="taxonomic scope" value="Eukaryota"/>
</dbReference>
<dbReference type="InParanoid" id="Q8T880"/>
<dbReference type="OrthoDB" id="297923at2759"/>
<dbReference type="Proteomes" id="UP000008144">
    <property type="component" value="Unplaced"/>
</dbReference>
<dbReference type="GO" id="GO:0005930">
    <property type="term" value="C:axoneme"/>
    <property type="evidence" value="ECO:0000318"/>
    <property type="project" value="GO_Central"/>
</dbReference>
<dbReference type="GO" id="GO:0048487">
    <property type="term" value="F:beta-tubulin binding"/>
    <property type="evidence" value="ECO:0000318"/>
    <property type="project" value="GO_Central"/>
</dbReference>
<dbReference type="GO" id="GO:0008017">
    <property type="term" value="F:microtubule binding"/>
    <property type="evidence" value="ECO:0000318"/>
    <property type="project" value="GO_Central"/>
</dbReference>
<dbReference type="InterPro" id="IPR022110">
    <property type="entry name" value="CASC1_C"/>
</dbReference>
<dbReference type="InterPro" id="IPR031826">
    <property type="entry name" value="IC97/Casc1_N"/>
</dbReference>
<dbReference type="InterPro" id="IPR023247">
    <property type="entry name" value="IC97/Dnai7-like"/>
</dbReference>
<dbReference type="PANTHER" id="PTHR20929:SF11">
    <property type="entry name" value="DYNEIN AXONEMAL INTERMEDIATE CHAIN 7"/>
    <property type="match status" value="1"/>
</dbReference>
<dbReference type="PANTHER" id="PTHR20929">
    <property type="entry name" value="LUNG ADENOMA SUSCEPTIBILITY 1-RELATED"/>
    <property type="match status" value="1"/>
</dbReference>
<dbReference type="Pfam" id="PF12366">
    <property type="entry name" value="Casc1_C"/>
    <property type="match status" value="1"/>
</dbReference>
<dbReference type="Pfam" id="PF15927">
    <property type="entry name" value="Casc1_N"/>
    <property type="match status" value="1"/>
</dbReference>
<dbReference type="PRINTS" id="PR02043">
    <property type="entry name" value="CANCERSCCP1"/>
</dbReference>
<protein>
    <recommendedName>
        <fullName evidence="2">Dynein axonemal intermediate chain 7 homolog</fullName>
    </recommendedName>
    <alternativeName>
        <fullName>Axonemal 84 kDa protein</fullName>
    </alternativeName>
    <alternativeName>
        <fullName>Ci-AXP83.9</fullName>
    </alternativeName>
    <alternativeName>
        <fullName>p83.9</fullName>
    </alternativeName>
</protein>
<sequence>MPPKSPNRSGKSTPTRGRPGEKKDEEKLLQDEEEERLRLEQEEKARQEKEAREKLEQERRAELDTKKDKQVFETNIELGAVKLEVEQVKNDKLAHAEWNRYMKCDGKPDPTSVKEINTFISLSHEKGSPDVNIVLEDAKLILSLISDLNELLEDFTPEEFEQKVDSYRQTILSLQDLLLNRYNEATLKMLKEASYEADSESGNLQKVVDGENETIMLWANLNKNPRFKLFEFENEKISFELPKVLAMADIAVRILRTKFDHYSHQCTTFLPKKKKVKDEEPIPEEPPKPEDAEEVEVKGDEENGEDAKSVVEEGRQSKQSNEPGLVNEGEKEEETKKDENEGEKEDAVKTPDVQIEIEDDEEEILDPDVVDLRQFSPLGGVYHVDLLKTPPQPNIVRGWTLTQIIDKPLSTVKYPSDNPNTGRSSSRVASANPEGRDEGSPSKTPLEQQQPPIGLTFALPSNVMFFEEPQVASWDSSDKHWKTSGITDTNFDEENRKLLFKTQEFGTFCLMQDSHLNMPFQSWELKPKGTNSTVLTITAAIAEVEIEVKDSKCRLNAPAEDPPKELSGLYGKWMAVPKLIAAMRDAGVNVFPAEDSHKFVSIQSKEVDLERVYEQMAILSSTFAFSWSKWNNDAGSKQVIIQIAPCLIKENVPRDAVSDDDWSIFSVSDDMSYKLALSEYDEEFADVVAKGATYHCDLLHAQYERQPLKTATKNCWNNSPKNHKTRTSFSFTRLPHY</sequence>
<gene>
    <name type="primary">AXP83.9</name>
</gene>
<evidence type="ECO:0000256" key="1">
    <source>
        <dbReference type="SAM" id="MobiDB-lite"/>
    </source>
</evidence>
<evidence type="ECO:0000305" key="2"/>
<organism>
    <name type="scientific">Ciona intestinalis</name>
    <name type="common">Transparent sea squirt</name>
    <name type="synonym">Ascidia intestinalis</name>
    <dbReference type="NCBI Taxonomy" id="7719"/>
    <lineage>
        <taxon>Eukaryota</taxon>
        <taxon>Metazoa</taxon>
        <taxon>Chordata</taxon>
        <taxon>Tunicata</taxon>
        <taxon>Ascidiacea</taxon>
        <taxon>Phlebobranchia</taxon>
        <taxon>Cionidae</taxon>
        <taxon>Ciona</taxon>
    </lineage>
</organism>
<proteinExistence type="evidence at transcript level"/>
<reference key="1">
    <citation type="submission" date="2002-04" db="EMBL/GenBank/DDBJ databases">
        <title>Molecular cloning of ascidian axonemal 84 kDa protein.</title>
        <authorList>
            <person name="Inaba K."/>
            <person name="Ushimaru Y."/>
        </authorList>
    </citation>
    <scope>NUCLEOTIDE SEQUENCE [MRNA]</scope>
    <source>
        <tissue>Testis</tissue>
    </source>
</reference>
<feature type="chain" id="PRO_0000332736" description="Dynein axonemal intermediate chain 7 homolog">
    <location>
        <begin position="1"/>
        <end position="737"/>
    </location>
</feature>
<feature type="region of interest" description="Disordered" evidence="1">
    <location>
        <begin position="1"/>
        <end position="61"/>
    </location>
</feature>
<feature type="region of interest" description="Disordered" evidence="1">
    <location>
        <begin position="274"/>
        <end position="362"/>
    </location>
</feature>
<feature type="region of interest" description="Disordered" evidence="1">
    <location>
        <begin position="410"/>
        <end position="452"/>
    </location>
</feature>
<feature type="compositionally biased region" description="Polar residues" evidence="1">
    <location>
        <begin position="1"/>
        <end position="15"/>
    </location>
</feature>
<feature type="compositionally biased region" description="Basic and acidic residues" evidence="1">
    <location>
        <begin position="18"/>
        <end position="61"/>
    </location>
</feature>
<feature type="compositionally biased region" description="Basic and acidic residues" evidence="1">
    <location>
        <begin position="276"/>
        <end position="316"/>
    </location>
</feature>
<feature type="compositionally biased region" description="Basic and acidic residues" evidence="1">
    <location>
        <begin position="333"/>
        <end position="349"/>
    </location>
</feature>
<feature type="compositionally biased region" description="Polar residues" evidence="1">
    <location>
        <begin position="417"/>
        <end position="429"/>
    </location>
</feature>
<feature type="compositionally biased region" description="Polar residues" evidence="1">
    <location>
        <begin position="441"/>
        <end position="451"/>
    </location>
</feature>